<comment type="function">
    <text evidence="5">May play a role in plant defense. Probably has no oxalate oxidase activity even if the active site is conserved.</text>
</comment>
<comment type="subunit">
    <text evidence="1">Oligomer (believed to be a pentamer but probably hexamer).</text>
</comment>
<comment type="subcellular location">
    <subcellularLocation>
        <location evidence="1">Secreted</location>
        <location evidence="1">Extracellular space</location>
        <location evidence="1">Apoplast</location>
    </subcellularLocation>
</comment>
<comment type="PTM">
    <text evidence="2">The three different mass spectrometry results appear to arise from different glycosylation variants.</text>
</comment>
<comment type="mass spectrometry" mass="23094.0" method="MALDI" evidence="2"/>
<comment type="mass spectrometry" mass="23298.0" method="MALDI" evidence="2"/>
<comment type="mass spectrometry" mass="23504.0" method="MALDI" evidence="2"/>
<comment type="allergen">
    <text evidence="2 3">Causes an allergic reaction in human. Binds to IgE.</text>
</comment>
<comment type="similarity">
    <text evidence="5">Belongs to the germin family.</text>
</comment>
<sequence length="25" mass="2743">TDPGHLQDVXVAINDPKXGVFVNRK</sequence>
<protein>
    <recommendedName>
        <fullName>Germin-like protein</fullName>
    </recommendedName>
    <allergenName>Cit s 1</allergenName>
</protein>
<keyword id="KW-0020">Allergen</keyword>
<keyword id="KW-0052">Apoplast</keyword>
<keyword id="KW-0903">Direct protein sequencing</keyword>
<keyword id="KW-0464">Manganese</keyword>
<keyword id="KW-0479">Metal-binding</keyword>
<keyword id="KW-0964">Secreted</keyword>
<evidence type="ECO:0000250" key="1">
    <source>
        <dbReference type="UniProtKB" id="Q9FL89"/>
    </source>
</evidence>
<evidence type="ECO:0000269" key="2">
    <source>
    </source>
</evidence>
<evidence type="ECO:0000269" key="3">
    <source>
    </source>
</evidence>
<evidence type="ECO:0000303" key="4">
    <source>
    </source>
</evidence>
<evidence type="ECO:0000305" key="5"/>
<name>GLP1_CITSI</name>
<dbReference type="Allergome" id="1640">
    <property type="allergen name" value="Cit s 1"/>
</dbReference>
<dbReference type="Allergome" id="3199">
    <property type="allergen name" value="Cit s 1.0101"/>
</dbReference>
<dbReference type="GO" id="GO:0048046">
    <property type="term" value="C:apoplast"/>
    <property type="evidence" value="ECO:0007669"/>
    <property type="project" value="UniProtKB-SubCell"/>
</dbReference>
<dbReference type="GO" id="GO:0046872">
    <property type="term" value="F:metal ion binding"/>
    <property type="evidence" value="ECO:0007669"/>
    <property type="project" value="UniProtKB-KW"/>
</dbReference>
<organism>
    <name type="scientific">Citrus sinensis</name>
    <name type="common">Sweet orange</name>
    <name type="synonym">Citrus aurantium var. sinensis</name>
    <dbReference type="NCBI Taxonomy" id="2711"/>
    <lineage>
        <taxon>Eukaryota</taxon>
        <taxon>Viridiplantae</taxon>
        <taxon>Streptophyta</taxon>
        <taxon>Embryophyta</taxon>
        <taxon>Tracheophyta</taxon>
        <taxon>Spermatophyta</taxon>
        <taxon>Magnoliopsida</taxon>
        <taxon>eudicotyledons</taxon>
        <taxon>Gunneridae</taxon>
        <taxon>Pentapetalae</taxon>
        <taxon>rosids</taxon>
        <taxon>malvids</taxon>
        <taxon>Sapindales</taxon>
        <taxon>Rutaceae</taxon>
        <taxon>Aurantioideae</taxon>
        <taxon>Citrus</taxon>
    </lineage>
</organism>
<accession>P84159</accession>
<feature type="chain" id="PRO_0000192015" description="Germin-like protein">
    <location>
        <begin position="1"/>
        <end position="25" status="greater than"/>
    </location>
</feature>
<feature type="non-terminal residue" evidence="4">
    <location>
        <position position="25"/>
    </location>
</feature>
<proteinExistence type="evidence at protein level"/>
<reference evidence="5" key="1">
    <citation type="journal article" date="2006" name="Int. Arch. Allergy Immunol.">
        <title>Orange germin-like glycoprotein Cit s 1: an equivocal allergen.</title>
        <authorList>
            <person name="Ahrazem O."/>
            <person name="Ibanez M.D."/>
            <person name="Lopez-Torrejon G."/>
            <person name="Sanchez-Monge R."/>
            <person name="Sastre J."/>
            <person name="Lombardero M."/>
            <person name="Barber D."/>
            <person name="Salcedo G."/>
        </authorList>
    </citation>
    <scope>PROTEIN SEQUENCE</scope>
    <scope>MASS SPECTROMETRY</scope>
    <scope>ALLERGEN</scope>
</reference>
<reference key="2">
    <citation type="journal article" date="2006" name="Mol. Nutr. Food Res.">
        <title>Germin-like protein Cit s 1 and profilin Cit s 2 are major allergens in orange (Citrus sinensis) fruits.</title>
        <authorList>
            <person name="Crespo J.F."/>
            <person name="Retzek M."/>
            <person name="Foetisch K."/>
            <person name="Sierra-Maestro E."/>
            <person name="Cid-Sanchez A.B."/>
            <person name="Pascual C.Y."/>
            <person name="Conti A."/>
            <person name="Feliu A."/>
            <person name="Rodriguez J."/>
            <person name="Vieths S."/>
            <person name="Scheurer S."/>
        </authorList>
    </citation>
    <scope>PROTEIN SEQUENCE OF 1-15</scope>
    <scope>ALLERGEN</scope>
    <source>
        <tissue>Fruit flesh</tissue>
    </source>
</reference>